<sequence>MKLNELSPPKGARTARKRKGRGPGSGLGKTAGKGHKGQKARSGGGVRPGFEGGQMPVHRRLPKRGFCNIFAKKIAAVNVRDLARFEADSVVDAAALREARLISGKVDGVKILGHGEITQALTVKADQWSESAKEKIEKAGGKIEAA</sequence>
<proteinExistence type="inferred from homology"/>
<keyword id="KW-1185">Reference proteome</keyword>
<keyword id="KW-0687">Ribonucleoprotein</keyword>
<keyword id="KW-0689">Ribosomal protein</keyword>
<keyword id="KW-0694">RNA-binding</keyword>
<keyword id="KW-0699">rRNA-binding</keyword>
<feature type="chain" id="PRO_1000142806" description="Large ribosomal subunit protein uL15">
    <location>
        <begin position="1"/>
        <end position="146"/>
    </location>
</feature>
<feature type="region of interest" description="Disordered" evidence="2">
    <location>
        <begin position="1"/>
        <end position="58"/>
    </location>
</feature>
<feature type="compositionally biased region" description="Gly residues" evidence="2">
    <location>
        <begin position="22"/>
        <end position="31"/>
    </location>
</feature>
<feature type="compositionally biased region" description="Gly residues" evidence="2">
    <location>
        <begin position="42"/>
        <end position="52"/>
    </location>
</feature>
<gene>
    <name evidence="1" type="primary">rplO</name>
    <name type="ordered locus">Dalk_1896</name>
</gene>
<name>RL15_DESAL</name>
<comment type="function">
    <text evidence="1">Binds to the 23S rRNA.</text>
</comment>
<comment type="subunit">
    <text evidence="1">Part of the 50S ribosomal subunit.</text>
</comment>
<comment type="similarity">
    <text evidence="1">Belongs to the universal ribosomal protein uL15 family.</text>
</comment>
<protein>
    <recommendedName>
        <fullName evidence="1">Large ribosomal subunit protein uL15</fullName>
    </recommendedName>
    <alternativeName>
        <fullName evidence="3">50S ribosomal protein L15</fullName>
    </alternativeName>
</protein>
<dbReference type="EMBL" id="CP001322">
    <property type="protein sequence ID" value="ACL03593.1"/>
    <property type="molecule type" value="Genomic_DNA"/>
</dbReference>
<dbReference type="RefSeq" id="WP_012611024.1">
    <property type="nucleotide sequence ID" value="NC_011768.1"/>
</dbReference>
<dbReference type="SMR" id="B8FER6"/>
<dbReference type="KEGG" id="dal:Dalk_1896"/>
<dbReference type="eggNOG" id="COG0200">
    <property type="taxonomic scope" value="Bacteria"/>
</dbReference>
<dbReference type="HOGENOM" id="CLU_055188_4_2_7"/>
<dbReference type="Proteomes" id="UP000000739">
    <property type="component" value="Chromosome"/>
</dbReference>
<dbReference type="GO" id="GO:0022625">
    <property type="term" value="C:cytosolic large ribosomal subunit"/>
    <property type="evidence" value="ECO:0007669"/>
    <property type="project" value="TreeGrafter"/>
</dbReference>
<dbReference type="GO" id="GO:0019843">
    <property type="term" value="F:rRNA binding"/>
    <property type="evidence" value="ECO:0007669"/>
    <property type="project" value="UniProtKB-UniRule"/>
</dbReference>
<dbReference type="GO" id="GO:0003735">
    <property type="term" value="F:structural constituent of ribosome"/>
    <property type="evidence" value="ECO:0007669"/>
    <property type="project" value="InterPro"/>
</dbReference>
<dbReference type="GO" id="GO:0006412">
    <property type="term" value="P:translation"/>
    <property type="evidence" value="ECO:0007669"/>
    <property type="project" value="UniProtKB-UniRule"/>
</dbReference>
<dbReference type="Gene3D" id="3.100.10.10">
    <property type="match status" value="1"/>
</dbReference>
<dbReference type="HAMAP" id="MF_01341">
    <property type="entry name" value="Ribosomal_uL15"/>
    <property type="match status" value="1"/>
</dbReference>
<dbReference type="InterPro" id="IPR030878">
    <property type="entry name" value="Ribosomal_uL15"/>
</dbReference>
<dbReference type="InterPro" id="IPR021131">
    <property type="entry name" value="Ribosomal_uL15/eL18"/>
</dbReference>
<dbReference type="InterPro" id="IPR036227">
    <property type="entry name" value="Ribosomal_uL15/eL18_sf"/>
</dbReference>
<dbReference type="InterPro" id="IPR005749">
    <property type="entry name" value="Ribosomal_uL15_bac-type"/>
</dbReference>
<dbReference type="NCBIfam" id="TIGR01071">
    <property type="entry name" value="rplO_bact"/>
    <property type="match status" value="1"/>
</dbReference>
<dbReference type="PANTHER" id="PTHR12934">
    <property type="entry name" value="50S RIBOSOMAL PROTEIN L15"/>
    <property type="match status" value="1"/>
</dbReference>
<dbReference type="PANTHER" id="PTHR12934:SF11">
    <property type="entry name" value="LARGE RIBOSOMAL SUBUNIT PROTEIN UL15M"/>
    <property type="match status" value="1"/>
</dbReference>
<dbReference type="Pfam" id="PF00828">
    <property type="entry name" value="Ribosomal_L27A"/>
    <property type="match status" value="1"/>
</dbReference>
<dbReference type="SUPFAM" id="SSF52080">
    <property type="entry name" value="Ribosomal proteins L15p and L18e"/>
    <property type="match status" value="1"/>
</dbReference>
<organism>
    <name type="scientific">Desulfatibacillum aliphaticivorans</name>
    <dbReference type="NCBI Taxonomy" id="218208"/>
    <lineage>
        <taxon>Bacteria</taxon>
        <taxon>Pseudomonadati</taxon>
        <taxon>Thermodesulfobacteriota</taxon>
        <taxon>Desulfobacteria</taxon>
        <taxon>Desulfobacterales</taxon>
        <taxon>Desulfatibacillaceae</taxon>
        <taxon>Desulfatibacillum</taxon>
    </lineage>
</organism>
<accession>B8FER6</accession>
<evidence type="ECO:0000255" key="1">
    <source>
        <dbReference type="HAMAP-Rule" id="MF_01341"/>
    </source>
</evidence>
<evidence type="ECO:0000256" key="2">
    <source>
        <dbReference type="SAM" id="MobiDB-lite"/>
    </source>
</evidence>
<evidence type="ECO:0000305" key="3"/>
<reference key="1">
    <citation type="journal article" date="2012" name="Environ. Microbiol.">
        <title>The genome sequence of Desulfatibacillum alkenivorans AK-01: a blueprint for anaerobic alkane oxidation.</title>
        <authorList>
            <person name="Callaghan A.V."/>
            <person name="Morris B.E."/>
            <person name="Pereira I.A."/>
            <person name="McInerney M.J."/>
            <person name="Austin R.N."/>
            <person name="Groves J.T."/>
            <person name="Kukor J.J."/>
            <person name="Suflita J.M."/>
            <person name="Young L.Y."/>
            <person name="Zylstra G.J."/>
            <person name="Wawrik B."/>
        </authorList>
    </citation>
    <scope>NUCLEOTIDE SEQUENCE [LARGE SCALE GENOMIC DNA]</scope>
    <source>
        <strain>AK-01</strain>
    </source>
</reference>